<feature type="chain" id="PRO_1000120490" description="UPF0149 protein YpAngola_A3826">
    <location>
        <begin position="1"/>
        <end position="192"/>
    </location>
</feature>
<reference key="1">
    <citation type="journal article" date="2010" name="J. Bacteriol.">
        <title>Genome sequence of the deep-rooted Yersinia pestis strain Angola reveals new insights into the evolution and pangenome of the plague bacterium.</title>
        <authorList>
            <person name="Eppinger M."/>
            <person name="Worsham P.L."/>
            <person name="Nikolich M.P."/>
            <person name="Riley D.R."/>
            <person name="Sebastian Y."/>
            <person name="Mou S."/>
            <person name="Achtman M."/>
            <person name="Lindler L.E."/>
            <person name="Ravel J."/>
        </authorList>
    </citation>
    <scope>NUCLEOTIDE SEQUENCE [LARGE SCALE GENOMIC DNA]</scope>
    <source>
        <strain>Angola</strain>
    </source>
</reference>
<proteinExistence type="inferred from homology"/>
<evidence type="ECO:0000255" key="1">
    <source>
        <dbReference type="HAMAP-Rule" id="MF_00346"/>
    </source>
</evidence>
<comment type="similarity">
    <text evidence="1">Belongs to the UPF0149 family.</text>
</comment>
<organism>
    <name type="scientific">Yersinia pestis bv. Antiqua (strain Angola)</name>
    <dbReference type="NCBI Taxonomy" id="349746"/>
    <lineage>
        <taxon>Bacteria</taxon>
        <taxon>Pseudomonadati</taxon>
        <taxon>Pseudomonadota</taxon>
        <taxon>Gammaproteobacteria</taxon>
        <taxon>Enterobacterales</taxon>
        <taxon>Yersiniaceae</taxon>
        <taxon>Yersinia</taxon>
    </lineage>
</organism>
<dbReference type="EMBL" id="CP000901">
    <property type="protein sequence ID" value="ABX85536.1"/>
    <property type="molecule type" value="Genomic_DNA"/>
</dbReference>
<dbReference type="RefSeq" id="WP_002209953.1">
    <property type="nucleotide sequence ID" value="NZ_CP009935.1"/>
</dbReference>
<dbReference type="SMR" id="A9R4K2"/>
<dbReference type="KEGG" id="ypg:YpAngola_A3826"/>
<dbReference type="PATRIC" id="fig|349746.12.peg.542"/>
<dbReference type="GO" id="GO:0005829">
    <property type="term" value="C:cytosol"/>
    <property type="evidence" value="ECO:0007669"/>
    <property type="project" value="TreeGrafter"/>
</dbReference>
<dbReference type="FunFam" id="1.20.120.740:FF:000001">
    <property type="entry name" value="UPF0149 protein YgfB"/>
    <property type="match status" value="1"/>
</dbReference>
<dbReference type="Gene3D" id="1.20.120.740">
    <property type="entry name" value="YgfB uncharacterised protein family UPF0149, PF03695"/>
    <property type="match status" value="1"/>
</dbReference>
<dbReference type="HAMAP" id="MF_00346">
    <property type="entry name" value="UPF0149"/>
    <property type="match status" value="1"/>
</dbReference>
<dbReference type="InterPro" id="IPR011978">
    <property type="entry name" value="YgfB-like"/>
</dbReference>
<dbReference type="InterPro" id="IPR036255">
    <property type="entry name" value="YgfB-like_sf"/>
</dbReference>
<dbReference type="NCBIfam" id="NF002477">
    <property type="entry name" value="PRK01736.1"/>
    <property type="match status" value="1"/>
</dbReference>
<dbReference type="NCBIfam" id="TIGR02292">
    <property type="entry name" value="ygfB_yecA"/>
    <property type="match status" value="1"/>
</dbReference>
<dbReference type="PANTHER" id="PTHR37528">
    <property type="entry name" value="UPF0149 PROTEIN YGFB"/>
    <property type="match status" value="1"/>
</dbReference>
<dbReference type="PANTHER" id="PTHR37528:SF1">
    <property type="entry name" value="UPF0149 PROTEIN YGFB"/>
    <property type="match status" value="1"/>
</dbReference>
<dbReference type="Pfam" id="PF03695">
    <property type="entry name" value="UPF0149"/>
    <property type="match status" value="1"/>
</dbReference>
<dbReference type="SUPFAM" id="SSF101327">
    <property type="entry name" value="YgfB-like"/>
    <property type="match status" value="1"/>
</dbReference>
<accession>A9R4K2</accession>
<sequence>MSIENTLPTYPSLALALSQQAVALTPAEMHGLISGMLCGGSKDNGWQTLVHDLTNEGVAFPQALSLPLQQLHEATQEALENEGFMFQLLIPEGEDVTVFDRADALSGWVNHFLLGLGMLQPKLAQVKDEVGEAIDDLRNIAQLGYDEDEDQEELAQSLEEVVEYVRVAAILCHIEFTQQKPTAPEMHKPTLH</sequence>
<protein>
    <recommendedName>
        <fullName evidence="1">UPF0149 protein YpAngola_A3826</fullName>
    </recommendedName>
</protein>
<name>Y3826_YERPG</name>
<gene>
    <name type="ordered locus">YpAngola_A3826</name>
</gene>